<sequence>MRVRESELPGIGQKVEMITRNRDKISIIIHHDGRRELYYFDENDHEECVASVQFDDAEARQMSAILGGMAYKPKALEQVESALDDLIIEWCKAEAGAPAIHQTIGDLNVGQEYHVTVIAIVKKNQDKQLNPSSETVIDEGDTLVISGEGTGLKRLIREKLTAKGA</sequence>
<evidence type="ECO:0000255" key="1">
    <source>
        <dbReference type="PROSITE-ProRule" id="PRU00544"/>
    </source>
</evidence>
<organism>
    <name type="scientific">Bacillus subtilis (strain 168)</name>
    <dbReference type="NCBI Taxonomy" id="224308"/>
    <lineage>
        <taxon>Bacteria</taxon>
        <taxon>Bacillati</taxon>
        <taxon>Bacillota</taxon>
        <taxon>Bacilli</taxon>
        <taxon>Bacillales</taxon>
        <taxon>Bacillaceae</taxon>
        <taxon>Bacillus</taxon>
    </lineage>
</organism>
<proteinExistence type="predicted"/>
<dbReference type="EMBL" id="AL009126">
    <property type="protein sequence ID" value="CAB14723.1"/>
    <property type="molecule type" value="Genomic_DNA"/>
</dbReference>
<dbReference type="PIR" id="F69980">
    <property type="entry name" value="F69980"/>
</dbReference>
<dbReference type="RefSeq" id="NP_390642.1">
    <property type="nucleotide sequence ID" value="NC_000964.3"/>
</dbReference>
<dbReference type="RefSeq" id="WP_003229739.1">
    <property type="nucleotide sequence ID" value="NZ_OZ025638.1"/>
</dbReference>
<dbReference type="SMR" id="O32046"/>
<dbReference type="FunCoup" id="O32046">
    <property type="interactions" value="75"/>
</dbReference>
<dbReference type="STRING" id="224308.BSU27640"/>
<dbReference type="PaxDb" id="224308-BSU27640"/>
<dbReference type="EnsemblBacteria" id="CAB14723">
    <property type="protein sequence ID" value="CAB14723"/>
    <property type="gene ID" value="BSU_27640"/>
</dbReference>
<dbReference type="GeneID" id="937539"/>
<dbReference type="KEGG" id="bsu:BSU27640"/>
<dbReference type="PATRIC" id="fig|224308.179.peg.3003"/>
<dbReference type="eggNOG" id="COG0490">
    <property type="taxonomic scope" value="Bacteria"/>
</dbReference>
<dbReference type="InParanoid" id="O32046"/>
<dbReference type="OrthoDB" id="67547at2"/>
<dbReference type="PhylomeDB" id="O32046"/>
<dbReference type="BioCyc" id="BSUB:BSU27640-MONOMER"/>
<dbReference type="Proteomes" id="UP000001570">
    <property type="component" value="Chromosome"/>
</dbReference>
<dbReference type="GO" id="GO:0005886">
    <property type="term" value="C:plasma membrane"/>
    <property type="evidence" value="ECO:0000318"/>
    <property type="project" value="GO_Central"/>
</dbReference>
<dbReference type="GO" id="GO:0008324">
    <property type="term" value="F:monoatomic cation transmembrane transporter activity"/>
    <property type="evidence" value="ECO:0007669"/>
    <property type="project" value="InterPro"/>
</dbReference>
<dbReference type="GO" id="GO:0006813">
    <property type="term" value="P:potassium ion transport"/>
    <property type="evidence" value="ECO:0007669"/>
    <property type="project" value="InterPro"/>
</dbReference>
<dbReference type="Gene3D" id="3.30.70.1450">
    <property type="entry name" value="Regulator of K+ conductance, C-terminal domain"/>
    <property type="match status" value="1"/>
</dbReference>
<dbReference type="InterPro" id="IPR050144">
    <property type="entry name" value="AAE_transporter"/>
</dbReference>
<dbReference type="InterPro" id="IPR026278">
    <property type="entry name" value="K(+)/H(+)_antiporter_KhtT"/>
</dbReference>
<dbReference type="InterPro" id="IPR006037">
    <property type="entry name" value="RCK_C"/>
</dbReference>
<dbReference type="InterPro" id="IPR036721">
    <property type="entry name" value="RCK_C_sf"/>
</dbReference>
<dbReference type="PANTHER" id="PTHR30445">
    <property type="entry name" value="K(+)_H(+) ANTIPORTER SUBUNIT KHTT"/>
    <property type="match status" value="1"/>
</dbReference>
<dbReference type="PANTHER" id="PTHR30445:SF8">
    <property type="entry name" value="K(+)_H(+) ANTIPORTER SUBUNIT KHTT"/>
    <property type="match status" value="1"/>
</dbReference>
<dbReference type="Pfam" id="PF02080">
    <property type="entry name" value="TrkA_C"/>
    <property type="match status" value="1"/>
</dbReference>
<dbReference type="PIRSF" id="PIRSF005028">
    <property type="entry name" value="KhtT"/>
    <property type="match status" value="1"/>
</dbReference>
<dbReference type="SUPFAM" id="SSF116726">
    <property type="entry name" value="TrkA C-terminal domain-like"/>
    <property type="match status" value="1"/>
</dbReference>
<dbReference type="PROSITE" id="PS51202">
    <property type="entry name" value="RCK_C"/>
    <property type="match status" value="1"/>
</dbReference>
<name>YRVC_BACSU</name>
<feature type="chain" id="PRO_0000377724" description="Uncharacterized protein YrvC">
    <location>
        <begin position="1"/>
        <end position="165"/>
    </location>
</feature>
<feature type="domain" description="RCK C-terminal" evidence="1">
    <location>
        <begin position="76"/>
        <end position="161"/>
    </location>
</feature>
<keyword id="KW-1185">Reference proteome</keyword>
<protein>
    <recommendedName>
        <fullName>Uncharacterized protein YrvC</fullName>
    </recommendedName>
</protein>
<reference key="1">
    <citation type="journal article" date="1997" name="Nature">
        <title>The complete genome sequence of the Gram-positive bacterium Bacillus subtilis.</title>
        <authorList>
            <person name="Kunst F."/>
            <person name="Ogasawara N."/>
            <person name="Moszer I."/>
            <person name="Albertini A.M."/>
            <person name="Alloni G."/>
            <person name="Azevedo V."/>
            <person name="Bertero M.G."/>
            <person name="Bessieres P."/>
            <person name="Bolotin A."/>
            <person name="Borchert S."/>
            <person name="Borriss R."/>
            <person name="Boursier L."/>
            <person name="Brans A."/>
            <person name="Braun M."/>
            <person name="Brignell S.C."/>
            <person name="Bron S."/>
            <person name="Brouillet S."/>
            <person name="Bruschi C.V."/>
            <person name="Caldwell B."/>
            <person name="Capuano V."/>
            <person name="Carter N.M."/>
            <person name="Choi S.-K."/>
            <person name="Codani J.-J."/>
            <person name="Connerton I.F."/>
            <person name="Cummings N.J."/>
            <person name="Daniel R.A."/>
            <person name="Denizot F."/>
            <person name="Devine K.M."/>
            <person name="Duesterhoeft A."/>
            <person name="Ehrlich S.D."/>
            <person name="Emmerson P.T."/>
            <person name="Entian K.-D."/>
            <person name="Errington J."/>
            <person name="Fabret C."/>
            <person name="Ferrari E."/>
            <person name="Foulger D."/>
            <person name="Fritz C."/>
            <person name="Fujita M."/>
            <person name="Fujita Y."/>
            <person name="Fuma S."/>
            <person name="Galizzi A."/>
            <person name="Galleron N."/>
            <person name="Ghim S.-Y."/>
            <person name="Glaser P."/>
            <person name="Goffeau A."/>
            <person name="Golightly E.J."/>
            <person name="Grandi G."/>
            <person name="Guiseppi G."/>
            <person name="Guy B.J."/>
            <person name="Haga K."/>
            <person name="Haiech J."/>
            <person name="Harwood C.R."/>
            <person name="Henaut A."/>
            <person name="Hilbert H."/>
            <person name="Holsappel S."/>
            <person name="Hosono S."/>
            <person name="Hullo M.-F."/>
            <person name="Itaya M."/>
            <person name="Jones L.-M."/>
            <person name="Joris B."/>
            <person name="Karamata D."/>
            <person name="Kasahara Y."/>
            <person name="Klaerr-Blanchard M."/>
            <person name="Klein C."/>
            <person name="Kobayashi Y."/>
            <person name="Koetter P."/>
            <person name="Koningstein G."/>
            <person name="Krogh S."/>
            <person name="Kumano M."/>
            <person name="Kurita K."/>
            <person name="Lapidus A."/>
            <person name="Lardinois S."/>
            <person name="Lauber J."/>
            <person name="Lazarevic V."/>
            <person name="Lee S.-M."/>
            <person name="Levine A."/>
            <person name="Liu H."/>
            <person name="Masuda S."/>
            <person name="Mauel C."/>
            <person name="Medigue C."/>
            <person name="Medina N."/>
            <person name="Mellado R.P."/>
            <person name="Mizuno M."/>
            <person name="Moestl D."/>
            <person name="Nakai S."/>
            <person name="Noback M."/>
            <person name="Noone D."/>
            <person name="O'Reilly M."/>
            <person name="Ogawa K."/>
            <person name="Ogiwara A."/>
            <person name="Oudega B."/>
            <person name="Park S.-H."/>
            <person name="Parro V."/>
            <person name="Pohl T.M."/>
            <person name="Portetelle D."/>
            <person name="Porwollik S."/>
            <person name="Prescott A.M."/>
            <person name="Presecan E."/>
            <person name="Pujic P."/>
            <person name="Purnelle B."/>
            <person name="Rapoport G."/>
            <person name="Rey M."/>
            <person name="Reynolds S."/>
            <person name="Rieger M."/>
            <person name="Rivolta C."/>
            <person name="Rocha E."/>
            <person name="Roche B."/>
            <person name="Rose M."/>
            <person name="Sadaie Y."/>
            <person name="Sato T."/>
            <person name="Scanlan E."/>
            <person name="Schleich S."/>
            <person name="Schroeter R."/>
            <person name="Scoffone F."/>
            <person name="Sekiguchi J."/>
            <person name="Sekowska A."/>
            <person name="Seror S.J."/>
            <person name="Serror P."/>
            <person name="Shin B.-S."/>
            <person name="Soldo B."/>
            <person name="Sorokin A."/>
            <person name="Tacconi E."/>
            <person name="Takagi T."/>
            <person name="Takahashi H."/>
            <person name="Takemaru K."/>
            <person name="Takeuchi M."/>
            <person name="Tamakoshi A."/>
            <person name="Tanaka T."/>
            <person name="Terpstra P."/>
            <person name="Tognoni A."/>
            <person name="Tosato V."/>
            <person name="Uchiyama S."/>
            <person name="Vandenbol M."/>
            <person name="Vannier F."/>
            <person name="Vassarotti A."/>
            <person name="Viari A."/>
            <person name="Wambutt R."/>
            <person name="Wedler E."/>
            <person name="Wedler H."/>
            <person name="Weitzenegger T."/>
            <person name="Winters P."/>
            <person name="Wipat A."/>
            <person name="Yamamoto H."/>
            <person name="Yamane K."/>
            <person name="Yasumoto K."/>
            <person name="Yata K."/>
            <person name="Yoshida K."/>
            <person name="Yoshikawa H.-F."/>
            <person name="Zumstein E."/>
            <person name="Yoshikawa H."/>
            <person name="Danchin A."/>
        </authorList>
    </citation>
    <scope>NUCLEOTIDE SEQUENCE [LARGE SCALE GENOMIC DNA]</scope>
    <source>
        <strain>168</strain>
    </source>
</reference>
<gene>
    <name type="primary">yrvC</name>
    <name type="ordered locus">BSU27640</name>
</gene>
<accession>O32046</accession>